<reference key="1">
    <citation type="journal article" date="1992" name="Biochem. J.">
        <title>On the catalytic mechanism of prokaryotic leader peptidase 1.</title>
        <authorList>
            <person name="Black M.T."/>
            <person name="Munn J.G.R."/>
            <person name="Allsop A.E."/>
        </authorList>
    </citation>
    <scope>NUCLEOTIDE SEQUENCE [GENOMIC DNA]</scope>
    <source>
        <strain>ATCC 49323 / NCIMB 10586</strain>
    </source>
</reference>
<keyword id="KW-1003">Cell membrane</keyword>
<keyword id="KW-0342">GTP-binding</keyword>
<keyword id="KW-0378">Hydrolase</keyword>
<keyword id="KW-0472">Membrane</keyword>
<keyword id="KW-0547">Nucleotide-binding</keyword>
<keyword id="KW-0648">Protein biosynthesis</keyword>
<evidence type="ECO:0000250" key="1"/>
<evidence type="ECO:0000305" key="2"/>
<organism>
    <name type="scientific">Pseudomonas fluorescens</name>
    <dbReference type="NCBI Taxonomy" id="294"/>
    <lineage>
        <taxon>Bacteria</taxon>
        <taxon>Pseudomonadati</taxon>
        <taxon>Pseudomonadota</taxon>
        <taxon>Gammaproteobacteria</taxon>
        <taxon>Pseudomonadales</taxon>
        <taxon>Pseudomonadaceae</taxon>
        <taxon>Pseudomonas</taxon>
    </lineage>
</organism>
<proteinExistence type="inferred from homology"/>
<accession>P26843</accession>
<gene>
    <name type="primary">lepA</name>
</gene>
<name>LEPA_PSEFL</name>
<sequence>GTQVQVTYDMPMNEVVLDFFDRLKSTSRGYASLDYHFDRYQSANLVKLDLLINGDKVDALALIVHKDNAHYKGRQLTEKMKELIPRQMFDVAIQAAIGGQIIARTSVKALRKNVLAKCYGGDVSRKRKLLEKQKAGKKRMKQVGNVEVPQEAFLAVLRLDS</sequence>
<dbReference type="EC" id="3.6.5.n1"/>
<dbReference type="EMBL" id="X56466">
    <property type="protein sequence ID" value="CAA39838.1"/>
    <property type="molecule type" value="Genomic_DNA"/>
</dbReference>
<dbReference type="PIR" id="S36680">
    <property type="entry name" value="S36680"/>
</dbReference>
<dbReference type="SMR" id="P26843"/>
<dbReference type="eggNOG" id="COG0481">
    <property type="taxonomic scope" value="Bacteria"/>
</dbReference>
<dbReference type="GO" id="GO:0005886">
    <property type="term" value="C:plasma membrane"/>
    <property type="evidence" value="ECO:0007669"/>
    <property type="project" value="UniProtKB-SubCell"/>
</dbReference>
<dbReference type="GO" id="GO:0005525">
    <property type="term" value="F:GTP binding"/>
    <property type="evidence" value="ECO:0007669"/>
    <property type="project" value="UniProtKB-KW"/>
</dbReference>
<dbReference type="GO" id="GO:0003924">
    <property type="term" value="F:GTPase activity"/>
    <property type="evidence" value="ECO:0007669"/>
    <property type="project" value="RHEA"/>
</dbReference>
<dbReference type="GO" id="GO:0043022">
    <property type="term" value="F:ribosome binding"/>
    <property type="evidence" value="ECO:0007669"/>
    <property type="project" value="TreeGrafter"/>
</dbReference>
<dbReference type="GO" id="GO:0045727">
    <property type="term" value="P:positive regulation of translation"/>
    <property type="evidence" value="ECO:0007669"/>
    <property type="project" value="TreeGrafter"/>
</dbReference>
<dbReference type="GO" id="GO:0006412">
    <property type="term" value="P:translation"/>
    <property type="evidence" value="ECO:0007669"/>
    <property type="project" value="UniProtKB-KW"/>
</dbReference>
<dbReference type="FunFam" id="3.30.70.2570:FF:000001">
    <property type="entry name" value="Translation factor GUF1, mitochondrial"/>
    <property type="match status" value="1"/>
</dbReference>
<dbReference type="Gene3D" id="3.30.70.240">
    <property type="match status" value="1"/>
</dbReference>
<dbReference type="Gene3D" id="3.30.70.2570">
    <property type="entry name" value="Elongation factor 4, C-terminal domain"/>
    <property type="match status" value="1"/>
</dbReference>
<dbReference type="InterPro" id="IPR006297">
    <property type="entry name" value="EF-4"/>
</dbReference>
<dbReference type="InterPro" id="IPR035647">
    <property type="entry name" value="EFG_III/V"/>
</dbReference>
<dbReference type="InterPro" id="IPR000640">
    <property type="entry name" value="EFG_V-like"/>
</dbReference>
<dbReference type="InterPro" id="IPR038363">
    <property type="entry name" value="LepA_C_sf"/>
</dbReference>
<dbReference type="InterPro" id="IPR013842">
    <property type="entry name" value="LepA_CTD"/>
</dbReference>
<dbReference type="PANTHER" id="PTHR43512:SF4">
    <property type="entry name" value="TRANSLATION FACTOR GUF1 HOMOLOG, CHLOROPLASTIC"/>
    <property type="match status" value="1"/>
</dbReference>
<dbReference type="PANTHER" id="PTHR43512">
    <property type="entry name" value="TRANSLATION FACTOR GUF1-RELATED"/>
    <property type="match status" value="1"/>
</dbReference>
<dbReference type="Pfam" id="PF00679">
    <property type="entry name" value="EFG_C"/>
    <property type="match status" value="1"/>
</dbReference>
<dbReference type="Pfam" id="PF06421">
    <property type="entry name" value="LepA_C"/>
    <property type="match status" value="1"/>
</dbReference>
<dbReference type="SUPFAM" id="SSF54980">
    <property type="entry name" value="EF-G C-terminal domain-like"/>
    <property type="match status" value="1"/>
</dbReference>
<comment type="function">
    <text evidence="1">Required for accurate and efficient protein synthesis under certain stress conditions. May act as a fidelity factor of the translation reaction, by catalyzing a one-codon backward translocation of tRNAs on improperly translocated ribosomes. Back-translocation proceeds from a post-translocation (POST) complex to a pre-translocation (PRE) complex, thus giving elongation factor G a second chance to translocate the tRNAs correctly. Binds to ribosomes in a GTP-dependent manner (By similarity).</text>
</comment>
<comment type="catalytic activity">
    <reaction>
        <text>GTP + H2O = GDP + phosphate + H(+)</text>
        <dbReference type="Rhea" id="RHEA:19669"/>
        <dbReference type="ChEBI" id="CHEBI:15377"/>
        <dbReference type="ChEBI" id="CHEBI:15378"/>
        <dbReference type="ChEBI" id="CHEBI:37565"/>
        <dbReference type="ChEBI" id="CHEBI:43474"/>
        <dbReference type="ChEBI" id="CHEBI:58189"/>
        <dbReference type="EC" id="3.6.5.n1"/>
    </reaction>
</comment>
<comment type="subcellular location">
    <subcellularLocation>
        <location evidence="1">Cell membrane</location>
        <topology evidence="1">Peripheral membrane protein</topology>
        <orientation evidence="1">Cytoplasmic side</orientation>
    </subcellularLocation>
</comment>
<comment type="similarity">
    <text evidence="2">Belongs to the GTP-binding elongation factor family. LepA subfamily.</text>
</comment>
<protein>
    <recommendedName>
        <fullName>Elongation factor 4</fullName>
        <shortName>EF-4</shortName>
        <ecNumber>3.6.5.n1</ecNumber>
    </recommendedName>
    <alternativeName>
        <fullName>Ribosomal back-translocase LepA</fullName>
    </alternativeName>
</protein>
<feature type="chain" id="PRO_0000176324" description="Elongation factor 4">
    <location>
        <begin position="1" status="less than"/>
        <end position="161"/>
    </location>
</feature>
<feature type="non-terminal residue">
    <location>
        <position position="1"/>
    </location>
</feature>